<keyword id="KW-1003">Cell membrane</keyword>
<keyword id="KW-0342">GTP-binding</keyword>
<keyword id="KW-0449">Lipoprotein</keyword>
<keyword id="KW-0472">Membrane</keyword>
<keyword id="KW-0488">Methylation</keyword>
<keyword id="KW-0547">Nucleotide-binding</keyword>
<keyword id="KW-0636">Prenylation</keyword>
<keyword id="KW-0653">Protein transport</keyword>
<keyword id="KW-1185">Reference proteome</keyword>
<keyword id="KW-0813">Transport</keyword>
<evidence type="ECO:0000250" key="1"/>
<evidence type="ECO:0000305" key="2"/>
<protein>
    <recommendedName>
        <fullName>Ras-related protein RABG3d</fullName>
        <shortName>AtRABG3d</shortName>
    </recommendedName>
    <alternativeName>
        <fullName>Ras-related protein Rab72</fullName>
        <shortName>AtRab72</shortName>
    </alternativeName>
</protein>
<organism>
    <name type="scientific">Arabidopsis thaliana</name>
    <name type="common">Mouse-ear cress</name>
    <dbReference type="NCBI Taxonomy" id="3702"/>
    <lineage>
        <taxon>Eukaryota</taxon>
        <taxon>Viridiplantae</taxon>
        <taxon>Streptophyta</taxon>
        <taxon>Embryophyta</taxon>
        <taxon>Tracheophyta</taxon>
        <taxon>Spermatophyta</taxon>
        <taxon>Magnoliopsida</taxon>
        <taxon>eudicotyledons</taxon>
        <taxon>Gunneridae</taxon>
        <taxon>Pentapetalae</taxon>
        <taxon>rosids</taxon>
        <taxon>malvids</taxon>
        <taxon>Brassicales</taxon>
        <taxon>Brassicaceae</taxon>
        <taxon>Camelineae</taxon>
        <taxon>Arabidopsis</taxon>
    </lineage>
</organism>
<gene>
    <name type="primary">RABG3D</name>
    <name type="synonym">RAB72</name>
    <name type="ordered locus">At1g52280</name>
    <name type="ORF">F19K6.10</name>
</gene>
<feature type="chain" id="PRO_0000407364" description="Ras-related protein RABG3d">
    <location>
        <begin position="1"/>
        <end position="206"/>
    </location>
</feature>
<feature type="short sequence motif" description="Effector region" evidence="1">
    <location>
        <begin position="37"/>
        <end position="45"/>
    </location>
</feature>
<feature type="binding site" evidence="1">
    <location>
        <begin position="15"/>
        <end position="22"/>
    </location>
    <ligand>
        <name>GTP</name>
        <dbReference type="ChEBI" id="CHEBI:37565"/>
    </ligand>
</feature>
<feature type="binding site" evidence="1">
    <location>
        <begin position="63"/>
        <end position="67"/>
    </location>
    <ligand>
        <name>GTP</name>
        <dbReference type="ChEBI" id="CHEBI:37565"/>
    </ligand>
</feature>
<feature type="binding site" evidence="1">
    <location>
        <begin position="125"/>
        <end position="128"/>
    </location>
    <ligand>
        <name>GTP</name>
        <dbReference type="ChEBI" id="CHEBI:37565"/>
    </ligand>
</feature>
<feature type="binding site" evidence="1">
    <location>
        <begin position="158"/>
        <end position="159"/>
    </location>
    <ligand>
        <name>GTP</name>
        <dbReference type="ChEBI" id="CHEBI:37565"/>
    </ligand>
</feature>
<feature type="modified residue" description="Cysteine methyl ester" evidence="1">
    <location>
        <position position="206"/>
    </location>
</feature>
<feature type="lipid moiety-binding region" description="S-geranylgeranyl cysteine" evidence="1">
    <location>
        <position position="204"/>
    </location>
</feature>
<feature type="lipid moiety-binding region" description="S-geranylgeranyl cysteine" evidence="1">
    <location>
        <position position="206"/>
    </location>
</feature>
<sequence>MSSRRRVLLKVIILGDSGVGKTSLMNQFVNRKFSNQYKATIGADFLTKEVQIDDRIFTLQIWDTAGQERFQSLGVAFYRGADCCVLVYDVNVMKSFDNLNNWREEFLIQASPSDPENFPFVVLGNKTDVDGGKSRVVSEKKAKAWCASKGNIPYFETSAKEGFNVDAAFECITKNAFKNEPEEEPYLPDTIDVAGGQQQRSTGCEC</sequence>
<dbReference type="EMBL" id="AB071847">
    <property type="protein sequence ID" value="BAB68372.1"/>
    <property type="molecule type" value="mRNA"/>
</dbReference>
<dbReference type="EMBL" id="AC037424">
    <property type="protein sequence ID" value="AAG51552.1"/>
    <property type="molecule type" value="Genomic_DNA"/>
</dbReference>
<dbReference type="EMBL" id="CP002684">
    <property type="protein sequence ID" value="AEE32777.1"/>
    <property type="molecule type" value="Genomic_DNA"/>
</dbReference>
<dbReference type="EMBL" id="AY074361">
    <property type="protein sequence ID" value="AAL67057.1"/>
    <property type="molecule type" value="mRNA"/>
</dbReference>
<dbReference type="EMBL" id="AY096407">
    <property type="protein sequence ID" value="AAM20047.1"/>
    <property type="molecule type" value="mRNA"/>
</dbReference>
<dbReference type="PIR" id="H96562">
    <property type="entry name" value="H96562"/>
</dbReference>
<dbReference type="RefSeq" id="NP_175638.1">
    <property type="nucleotide sequence ID" value="NM_104107.3"/>
</dbReference>
<dbReference type="SMR" id="Q9C820"/>
<dbReference type="BioGRID" id="26883">
    <property type="interactions" value="4"/>
</dbReference>
<dbReference type="FunCoup" id="Q9C820">
    <property type="interactions" value="4033"/>
</dbReference>
<dbReference type="IntAct" id="Q9C820">
    <property type="interactions" value="4"/>
</dbReference>
<dbReference type="STRING" id="3702.Q9C820"/>
<dbReference type="PaxDb" id="3702-AT1G52280.1"/>
<dbReference type="ProteomicsDB" id="236342"/>
<dbReference type="EnsemblPlants" id="AT1G52280.1">
    <property type="protein sequence ID" value="AT1G52280.1"/>
    <property type="gene ID" value="AT1G52280"/>
</dbReference>
<dbReference type="GeneID" id="841658"/>
<dbReference type="Gramene" id="AT1G52280.1">
    <property type="protein sequence ID" value="AT1G52280.1"/>
    <property type="gene ID" value="AT1G52280"/>
</dbReference>
<dbReference type="KEGG" id="ath:AT1G52280"/>
<dbReference type="Araport" id="AT1G52280"/>
<dbReference type="TAIR" id="AT1G52280">
    <property type="gene designation" value="RABG3D"/>
</dbReference>
<dbReference type="eggNOG" id="KOG0394">
    <property type="taxonomic scope" value="Eukaryota"/>
</dbReference>
<dbReference type="HOGENOM" id="CLU_041217_10_6_1"/>
<dbReference type="InParanoid" id="Q9C820"/>
<dbReference type="OMA" id="TSWKDEF"/>
<dbReference type="OrthoDB" id="1022880at2759"/>
<dbReference type="PhylomeDB" id="Q9C820"/>
<dbReference type="PRO" id="PR:Q9C820"/>
<dbReference type="Proteomes" id="UP000006548">
    <property type="component" value="Chromosome 1"/>
</dbReference>
<dbReference type="ExpressionAtlas" id="Q9C820">
    <property type="expression patterns" value="baseline and differential"/>
</dbReference>
<dbReference type="GO" id="GO:0005794">
    <property type="term" value="C:Golgi apparatus"/>
    <property type="evidence" value="ECO:0007005"/>
    <property type="project" value="TAIR"/>
</dbReference>
<dbReference type="GO" id="GO:0005634">
    <property type="term" value="C:nucleus"/>
    <property type="evidence" value="ECO:0007005"/>
    <property type="project" value="TAIR"/>
</dbReference>
<dbReference type="GO" id="GO:0000325">
    <property type="term" value="C:plant-type vacuole"/>
    <property type="evidence" value="ECO:0007005"/>
    <property type="project" value="TAIR"/>
</dbReference>
<dbReference type="GO" id="GO:0005886">
    <property type="term" value="C:plasma membrane"/>
    <property type="evidence" value="ECO:0007005"/>
    <property type="project" value="TAIR"/>
</dbReference>
<dbReference type="GO" id="GO:0005525">
    <property type="term" value="F:GTP binding"/>
    <property type="evidence" value="ECO:0007669"/>
    <property type="project" value="UniProtKB-KW"/>
</dbReference>
<dbReference type="GO" id="GO:0003924">
    <property type="term" value="F:GTPase activity"/>
    <property type="evidence" value="ECO:0007669"/>
    <property type="project" value="InterPro"/>
</dbReference>
<dbReference type="GO" id="GO:0015031">
    <property type="term" value="P:protein transport"/>
    <property type="evidence" value="ECO:0007669"/>
    <property type="project" value="UniProtKB-KW"/>
</dbReference>
<dbReference type="CDD" id="cd01862">
    <property type="entry name" value="Rab7"/>
    <property type="match status" value="1"/>
</dbReference>
<dbReference type="FunFam" id="3.40.50.300:FF:000295">
    <property type="entry name" value="Ras-related protein Rab7"/>
    <property type="match status" value="1"/>
</dbReference>
<dbReference type="Gene3D" id="3.40.50.300">
    <property type="entry name" value="P-loop containing nucleotide triphosphate hydrolases"/>
    <property type="match status" value="1"/>
</dbReference>
<dbReference type="InterPro" id="IPR027417">
    <property type="entry name" value="P-loop_NTPase"/>
</dbReference>
<dbReference type="InterPro" id="IPR005225">
    <property type="entry name" value="Small_GTP-bd"/>
</dbReference>
<dbReference type="InterPro" id="IPR001806">
    <property type="entry name" value="Small_GTPase"/>
</dbReference>
<dbReference type="NCBIfam" id="TIGR00231">
    <property type="entry name" value="small_GTP"/>
    <property type="match status" value="1"/>
</dbReference>
<dbReference type="PANTHER" id="PTHR47981">
    <property type="entry name" value="RAB FAMILY"/>
    <property type="match status" value="1"/>
</dbReference>
<dbReference type="PANTHER" id="PTHR47981:SF44">
    <property type="entry name" value="RAS-RELATED PROTEIN RABG3C-RELATED"/>
    <property type="match status" value="1"/>
</dbReference>
<dbReference type="Pfam" id="PF00071">
    <property type="entry name" value="Ras"/>
    <property type="match status" value="1"/>
</dbReference>
<dbReference type="PRINTS" id="PR00449">
    <property type="entry name" value="RASTRNSFRMNG"/>
</dbReference>
<dbReference type="SMART" id="SM00175">
    <property type="entry name" value="RAB"/>
    <property type="match status" value="1"/>
</dbReference>
<dbReference type="SMART" id="SM00176">
    <property type="entry name" value="RAN"/>
    <property type="match status" value="1"/>
</dbReference>
<dbReference type="SMART" id="SM00173">
    <property type="entry name" value="RAS"/>
    <property type="match status" value="1"/>
</dbReference>
<dbReference type="SMART" id="SM00174">
    <property type="entry name" value="RHO"/>
    <property type="match status" value="1"/>
</dbReference>
<dbReference type="SUPFAM" id="SSF52540">
    <property type="entry name" value="P-loop containing nucleoside triphosphate hydrolases"/>
    <property type="match status" value="1"/>
</dbReference>
<dbReference type="PROSITE" id="PS51419">
    <property type="entry name" value="RAB"/>
    <property type="match status" value="1"/>
</dbReference>
<comment type="function">
    <text evidence="1">Intracellular vesicle trafficking and protein transport.</text>
</comment>
<comment type="subcellular location">
    <subcellularLocation>
        <location evidence="2">Cell membrane</location>
        <topology evidence="2">Lipid-anchor</topology>
        <orientation evidence="2">Cytoplasmic side</orientation>
    </subcellularLocation>
</comment>
<comment type="similarity">
    <text evidence="2">Belongs to the small GTPase superfamily. Rab family.</text>
</comment>
<name>RAG3D_ARATH</name>
<accession>Q9C820</accession>
<reference key="1">
    <citation type="submission" date="2001-09" db="EMBL/GenBank/DDBJ databases">
        <title>Rab7 homologs in Arabidopsis thaliana.</title>
        <authorList>
            <person name="Ueda T."/>
            <person name="Wada Y."/>
            <person name="Nakano A."/>
        </authorList>
    </citation>
    <scope>NUCLEOTIDE SEQUENCE [MRNA]</scope>
</reference>
<reference key="2">
    <citation type="journal article" date="2000" name="Nature">
        <title>Sequence and analysis of chromosome 1 of the plant Arabidopsis thaliana.</title>
        <authorList>
            <person name="Theologis A."/>
            <person name="Ecker J.R."/>
            <person name="Palm C.J."/>
            <person name="Federspiel N.A."/>
            <person name="Kaul S."/>
            <person name="White O."/>
            <person name="Alonso J."/>
            <person name="Altafi H."/>
            <person name="Araujo R."/>
            <person name="Bowman C.L."/>
            <person name="Brooks S.Y."/>
            <person name="Buehler E."/>
            <person name="Chan A."/>
            <person name="Chao Q."/>
            <person name="Chen H."/>
            <person name="Cheuk R.F."/>
            <person name="Chin C.W."/>
            <person name="Chung M.K."/>
            <person name="Conn L."/>
            <person name="Conway A.B."/>
            <person name="Conway A.R."/>
            <person name="Creasy T.H."/>
            <person name="Dewar K."/>
            <person name="Dunn P."/>
            <person name="Etgu P."/>
            <person name="Feldblyum T.V."/>
            <person name="Feng J.-D."/>
            <person name="Fong B."/>
            <person name="Fujii C.Y."/>
            <person name="Gill J.E."/>
            <person name="Goldsmith A.D."/>
            <person name="Haas B."/>
            <person name="Hansen N.F."/>
            <person name="Hughes B."/>
            <person name="Huizar L."/>
            <person name="Hunter J.L."/>
            <person name="Jenkins J."/>
            <person name="Johnson-Hopson C."/>
            <person name="Khan S."/>
            <person name="Khaykin E."/>
            <person name="Kim C.J."/>
            <person name="Koo H.L."/>
            <person name="Kremenetskaia I."/>
            <person name="Kurtz D.B."/>
            <person name="Kwan A."/>
            <person name="Lam B."/>
            <person name="Langin-Hooper S."/>
            <person name="Lee A."/>
            <person name="Lee J.M."/>
            <person name="Lenz C.A."/>
            <person name="Li J.H."/>
            <person name="Li Y.-P."/>
            <person name="Lin X."/>
            <person name="Liu S.X."/>
            <person name="Liu Z.A."/>
            <person name="Luros J.S."/>
            <person name="Maiti R."/>
            <person name="Marziali A."/>
            <person name="Militscher J."/>
            <person name="Miranda M."/>
            <person name="Nguyen M."/>
            <person name="Nierman W.C."/>
            <person name="Osborne B.I."/>
            <person name="Pai G."/>
            <person name="Peterson J."/>
            <person name="Pham P.K."/>
            <person name="Rizzo M."/>
            <person name="Rooney T."/>
            <person name="Rowley D."/>
            <person name="Sakano H."/>
            <person name="Salzberg S.L."/>
            <person name="Schwartz J.R."/>
            <person name="Shinn P."/>
            <person name="Southwick A.M."/>
            <person name="Sun H."/>
            <person name="Tallon L.J."/>
            <person name="Tambunga G."/>
            <person name="Toriumi M.J."/>
            <person name="Town C.D."/>
            <person name="Utterback T."/>
            <person name="Van Aken S."/>
            <person name="Vaysberg M."/>
            <person name="Vysotskaia V.S."/>
            <person name="Walker M."/>
            <person name="Wu D."/>
            <person name="Yu G."/>
            <person name="Fraser C.M."/>
            <person name="Venter J.C."/>
            <person name="Davis R.W."/>
        </authorList>
    </citation>
    <scope>NUCLEOTIDE SEQUENCE [LARGE SCALE GENOMIC DNA]</scope>
    <source>
        <strain>cv. Columbia</strain>
    </source>
</reference>
<reference key="3">
    <citation type="journal article" date="2017" name="Plant J.">
        <title>Araport11: a complete reannotation of the Arabidopsis thaliana reference genome.</title>
        <authorList>
            <person name="Cheng C.Y."/>
            <person name="Krishnakumar V."/>
            <person name="Chan A.P."/>
            <person name="Thibaud-Nissen F."/>
            <person name="Schobel S."/>
            <person name="Town C.D."/>
        </authorList>
    </citation>
    <scope>GENOME REANNOTATION</scope>
    <source>
        <strain>cv. Columbia</strain>
    </source>
</reference>
<reference key="4">
    <citation type="journal article" date="2003" name="Science">
        <title>Empirical analysis of transcriptional activity in the Arabidopsis genome.</title>
        <authorList>
            <person name="Yamada K."/>
            <person name="Lim J."/>
            <person name="Dale J.M."/>
            <person name="Chen H."/>
            <person name="Shinn P."/>
            <person name="Palm C.J."/>
            <person name="Southwick A.M."/>
            <person name="Wu H.C."/>
            <person name="Kim C.J."/>
            <person name="Nguyen M."/>
            <person name="Pham P.K."/>
            <person name="Cheuk R.F."/>
            <person name="Karlin-Newmann G."/>
            <person name="Liu S.X."/>
            <person name="Lam B."/>
            <person name="Sakano H."/>
            <person name="Wu T."/>
            <person name="Yu G."/>
            <person name="Miranda M."/>
            <person name="Quach H.L."/>
            <person name="Tripp M."/>
            <person name="Chang C.H."/>
            <person name="Lee J.M."/>
            <person name="Toriumi M.J."/>
            <person name="Chan M.M."/>
            <person name="Tang C.C."/>
            <person name="Onodera C.S."/>
            <person name="Deng J.M."/>
            <person name="Akiyama K."/>
            <person name="Ansari Y."/>
            <person name="Arakawa T."/>
            <person name="Banh J."/>
            <person name="Banno F."/>
            <person name="Bowser L."/>
            <person name="Brooks S.Y."/>
            <person name="Carninci P."/>
            <person name="Chao Q."/>
            <person name="Choy N."/>
            <person name="Enju A."/>
            <person name="Goldsmith A.D."/>
            <person name="Gurjal M."/>
            <person name="Hansen N.F."/>
            <person name="Hayashizaki Y."/>
            <person name="Johnson-Hopson C."/>
            <person name="Hsuan V.W."/>
            <person name="Iida K."/>
            <person name="Karnes M."/>
            <person name="Khan S."/>
            <person name="Koesema E."/>
            <person name="Ishida J."/>
            <person name="Jiang P.X."/>
            <person name="Jones T."/>
            <person name="Kawai J."/>
            <person name="Kamiya A."/>
            <person name="Meyers C."/>
            <person name="Nakajima M."/>
            <person name="Narusaka M."/>
            <person name="Seki M."/>
            <person name="Sakurai T."/>
            <person name="Satou M."/>
            <person name="Tamse R."/>
            <person name="Vaysberg M."/>
            <person name="Wallender E.K."/>
            <person name="Wong C."/>
            <person name="Yamamura Y."/>
            <person name="Yuan S."/>
            <person name="Shinozaki K."/>
            <person name="Davis R.W."/>
            <person name="Theologis A."/>
            <person name="Ecker J.R."/>
        </authorList>
    </citation>
    <scope>NUCLEOTIDE SEQUENCE [LARGE SCALE MRNA]</scope>
    <source>
        <strain>cv. Columbia</strain>
    </source>
</reference>
<reference key="5">
    <citation type="journal article" date="2003" name="Plant Physiol.">
        <title>Analysis of the small GTPase gene superfamily of Arabidopsis.</title>
        <authorList>
            <person name="Vernoud V."/>
            <person name="Horton A.C."/>
            <person name="Yang Z."/>
            <person name="Nielsen E."/>
        </authorList>
    </citation>
    <scope>GENE FAMILY</scope>
    <scope>NOMENCLATURE</scope>
</reference>
<proteinExistence type="evidence at transcript level"/>